<gene>
    <name type="primary">MT-CYB</name>
    <name type="synonym">COB</name>
    <name type="synonym">CYTB</name>
    <name type="synonym">MTCYB</name>
</gene>
<organism>
    <name type="scientific">Raphicerus campestris</name>
    <name type="common">Steenbok</name>
    <dbReference type="NCBI Taxonomy" id="59544"/>
    <lineage>
        <taxon>Eukaryota</taxon>
        <taxon>Metazoa</taxon>
        <taxon>Chordata</taxon>
        <taxon>Craniata</taxon>
        <taxon>Vertebrata</taxon>
        <taxon>Euteleostomi</taxon>
        <taxon>Mammalia</taxon>
        <taxon>Eutheria</taxon>
        <taxon>Laurasiatheria</taxon>
        <taxon>Artiodactyla</taxon>
        <taxon>Ruminantia</taxon>
        <taxon>Pecora</taxon>
        <taxon>Bovidae</taxon>
        <taxon>Antilopinae</taxon>
        <taxon>Raphicerus</taxon>
    </lineage>
</organism>
<dbReference type="EMBL" id="AF022068">
    <property type="protein sequence ID" value="AAD13502.1"/>
    <property type="molecule type" value="Genomic_DNA"/>
</dbReference>
<dbReference type="SMR" id="O47718"/>
<dbReference type="GO" id="GO:0005743">
    <property type="term" value="C:mitochondrial inner membrane"/>
    <property type="evidence" value="ECO:0007669"/>
    <property type="project" value="UniProtKB-SubCell"/>
</dbReference>
<dbReference type="GO" id="GO:0045275">
    <property type="term" value="C:respiratory chain complex III"/>
    <property type="evidence" value="ECO:0007669"/>
    <property type="project" value="InterPro"/>
</dbReference>
<dbReference type="GO" id="GO:0046872">
    <property type="term" value="F:metal ion binding"/>
    <property type="evidence" value="ECO:0007669"/>
    <property type="project" value="UniProtKB-KW"/>
</dbReference>
<dbReference type="GO" id="GO:0008121">
    <property type="term" value="F:ubiquinol-cytochrome-c reductase activity"/>
    <property type="evidence" value="ECO:0007669"/>
    <property type="project" value="InterPro"/>
</dbReference>
<dbReference type="GO" id="GO:0006122">
    <property type="term" value="P:mitochondrial electron transport, ubiquinol to cytochrome c"/>
    <property type="evidence" value="ECO:0007669"/>
    <property type="project" value="TreeGrafter"/>
</dbReference>
<dbReference type="CDD" id="cd00290">
    <property type="entry name" value="cytochrome_b_C"/>
    <property type="match status" value="1"/>
</dbReference>
<dbReference type="CDD" id="cd00284">
    <property type="entry name" value="Cytochrome_b_N"/>
    <property type="match status" value="1"/>
</dbReference>
<dbReference type="FunFam" id="1.20.810.10:FF:000002">
    <property type="entry name" value="Cytochrome b"/>
    <property type="match status" value="1"/>
</dbReference>
<dbReference type="Gene3D" id="1.20.810.10">
    <property type="entry name" value="Cytochrome Bc1 Complex, Chain C"/>
    <property type="match status" value="1"/>
</dbReference>
<dbReference type="InterPro" id="IPR005798">
    <property type="entry name" value="Cyt_b/b6_C"/>
</dbReference>
<dbReference type="InterPro" id="IPR036150">
    <property type="entry name" value="Cyt_b/b6_C_sf"/>
</dbReference>
<dbReference type="InterPro" id="IPR005797">
    <property type="entry name" value="Cyt_b/b6_N"/>
</dbReference>
<dbReference type="InterPro" id="IPR027387">
    <property type="entry name" value="Cytb/b6-like_sf"/>
</dbReference>
<dbReference type="InterPro" id="IPR030689">
    <property type="entry name" value="Cytochrome_b"/>
</dbReference>
<dbReference type="InterPro" id="IPR048260">
    <property type="entry name" value="Cytochrome_b_C_euk/bac"/>
</dbReference>
<dbReference type="InterPro" id="IPR048259">
    <property type="entry name" value="Cytochrome_b_N_euk/bac"/>
</dbReference>
<dbReference type="InterPro" id="IPR016174">
    <property type="entry name" value="Di-haem_cyt_TM"/>
</dbReference>
<dbReference type="PANTHER" id="PTHR19271">
    <property type="entry name" value="CYTOCHROME B"/>
    <property type="match status" value="1"/>
</dbReference>
<dbReference type="PANTHER" id="PTHR19271:SF16">
    <property type="entry name" value="CYTOCHROME B"/>
    <property type="match status" value="1"/>
</dbReference>
<dbReference type="Pfam" id="PF00032">
    <property type="entry name" value="Cytochrom_B_C"/>
    <property type="match status" value="1"/>
</dbReference>
<dbReference type="Pfam" id="PF00033">
    <property type="entry name" value="Cytochrome_B"/>
    <property type="match status" value="1"/>
</dbReference>
<dbReference type="PIRSF" id="PIRSF038885">
    <property type="entry name" value="COB"/>
    <property type="match status" value="1"/>
</dbReference>
<dbReference type="SUPFAM" id="SSF81648">
    <property type="entry name" value="a domain/subunit of cytochrome bc1 complex (Ubiquinol-cytochrome c reductase)"/>
    <property type="match status" value="1"/>
</dbReference>
<dbReference type="SUPFAM" id="SSF81342">
    <property type="entry name" value="Transmembrane di-heme cytochromes"/>
    <property type="match status" value="1"/>
</dbReference>
<dbReference type="PROSITE" id="PS51003">
    <property type="entry name" value="CYTB_CTER"/>
    <property type="match status" value="1"/>
</dbReference>
<dbReference type="PROSITE" id="PS51002">
    <property type="entry name" value="CYTB_NTER"/>
    <property type="match status" value="1"/>
</dbReference>
<protein>
    <recommendedName>
        <fullName>Cytochrome b</fullName>
    </recommendedName>
    <alternativeName>
        <fullName>Complex III subunit 3</fullName>
    </alternativeName>
    <alternativeName>
        <fullName>Complex III subunit III</fullName>
    </alternativeName>
    <alternativeName>
        <fullName>Cytochrome b-c1 complex subunit 3</fullName>
    </alternativeName>
    <alternativeName>
        <fullName>Ubiquinol-cytochrome-c reductase complex cytochrome b subunit</fullName>
    </alternativeName>
</protein>
<name>CYB_RAPCA</name>
<reference key="1">
    <citation type="journal article" date="1999" name="Mol. Phylogenet. Evol.">
        <title>Cytochrome b phylogeny of the family bovidae: resolution within the alcelaphini, antilopini, neotragini, and tragelaphini.</title>
        <authorList>
            <person name="Matthee C.A."/>
            <person name="Robinson T.J."/>
        </authorList>
    </citation>
    <scope>NUCLEOTIDE SEQUENCE [GENOMIC DNA]</scope>
</reference>
<accession>O47718</accession>
<evidence type="ECO:0000250" key="1"/>
<evidence type="ECO:0000250" key="2">
    <source>
        <dbReference type="UniProtKB" id="P00157"/>
    </source>
</evidence>
<evidence type="ECO:0000255" key="3">
    <source>
        <dbReference type="PROSITE-ProRule" id="PRU00967"/>
    </source>
</evidence>
<evidence type="ECO:0000255" key="4">
    <source>
        <dbReference type="PROSITE-ProRule" id="PRU00968"/>
    </source>
</evidence>
<feature type="chain" id="PRO_0000061488" description="Cytochrome b">
    <location>
        <begin position="1"/>
        <end position="379"/>
    </location>
</feature>
<feature type="transmembrane region" description="Helical" evidence="2">
    <location>
        <begin position="33"/>
        <end position="53"/>
    </location>
</feature>
<feature type="transmembrane region" description="Helical" evidence="2">
    <location>
        <begin position="77"/>
        <end position="98"/>
    </location>
</feature>
<feature type="transmembrane region" description="Helical" evidence="2">
    <location>
        <begin position="113"/>
        <end position="133"/>
    </location>
</feature>
<feature type="transmembrane region" description="Helical" evidence="2">
    <location>
        <begin position="178"/>
        <end position="198"/>
    </location>
</feature>
<feature type="transmembrane region" description="Helical" evidence="2">
    <location>
        <begin position="226"/>
        <end position="246"/>
    </location>
</feature>
<feature type="transmembrane region" description="Helical" evidence="2">
    <location>
        <begin position="288"/>
        <end position="308"/>
    </location>
</feature>
<feature type="transmembrane region" description="Helical" evidence="2">
    <location>
        <begin position="320"/>
        <end position="340"/>
    </location>
</feature>
<feature type="transmembrane region" description="Helical" evidence="2">
    <location>
        <begin position="347"/>
        <end position="367"/>
    </location>
</feature>
<feature type="binding site" description="axial binding residue" evidence="2">
    <location>
        <position position="83"/>
    </location>
    <ligand>
        <name>heme b</name>
        <dbReference type="ChEBI" id="CHEBI:60344"/>
        <label>b562</label>
    </ligand>
    <ligandPart>
        <name>Fe</name>
        <dbReference type="ChEBI" id="CHEBI:18248"/>
    </ligandPart>
</feature>
<feature type="binding site" description="axial binding residue" evidence="2">
    <location>
        <position position="97"/>
    </location>
    <ligand>
        <name>heme b</name>
        <dbReference type="ChEBI" id="CHEBI:60344"/>
        <label>b566</label>
    </ligand>
    <ligandPart>
        <name>Fe</name>
        <dbReference type="ChEBI" id="CHEBI:18248"/>
    </ligandPart>
</feature>
<feature type="binding site" description="axial binding residue" evidence="2">
    <location>
        <position position="182"/>
    </location>
    <ligand>
        <name>heme b</name>
        <dbReference type="ChEBI" id="CHEBI:60344"/>
        <label>b562</label>
    </ligand>
    <ligandPart>
        <name>Fe</name>
        <dbReference type="ChEBI" id="CHEBI:18248"/>
    </ligandPart>
</feature>
<feature type="binding site" description="axial binding residue" evidence="2">
    <location>
        <position position="196"/>
    </location>
    <ligand>
        <name>heme b</name>
        <dbReference type="ChEBI" id="CHEBI:60344"/>
        <label>b566</label>
    </ligand>
    <ligandPart>
        <name>Fe</name>
        <dbReference type="ChEBI" id="CHEBI:18248"/>
    </ligandPart>
</feature>
<feature type="binding site" evidence="2">
    <location>
        <position position="201"/>
    </location>
    <ligand>
        <name>a ubiquinone</name>
        <dbReference type="ChEBI" id="CHEBI:16389"/>
    </ligand>
</feature>
<keyword id="KW-0249">Electron transport</keyword>
<keyword id="KW-0349">Heme</keyword>
<keyword id="KW-0408">Iron</keyword>
<keyword id="KW-0472">Membrane</keyword>
<keyword id="KW-0479">Metal-binding</keyword>
<keyword id="KW-0496">Mitochondrion</keyword>
<keyword id="KW-0999">Mitochondrion inner membrane</keyword>
<keyword id="KW-0679">Respiratory chain</keyword>
<keyword id="KW-0812">Transmembrane</keyword>
<keyword id="KW-1133">Transmembrane helix</keyword>
<keyword id="KW-0813">Transport</keyword>
<keyword id="KW-0830">Ubiquinone</keyword>
<comment type="function">
    <text evidence="2">Component of the ubiquinol-cytochrome c reductase complex (complex III or cytochrome b-c1 complex) that is part of the mitochondrial respiratory chain. The b-c1 complex mediates electron transfer from ubiquinol to cytochrome c. Contributes to the generation of a proton gradient across the mitochondrial membrane that is then used for ATP synthesis.</text>
</comment>
<comment type="cofactor">
    <cofactor evidence="2">
        <name>heme b</name>
        <dbReference type="ChEBI" id="CHEBI:60344"/>
    </cofactor>
    <text evidence="2">Binds 2 heme b groups non-covalently.</text>
</comment>
<comment type="subunit">
    <text evidence="2">The cytochrome bc1 complex contains 11 subunits: 3 respiratory subunits (MT-CYB, CYC1 and UQCRFS1), 2 core proteins (UQCRC1 and UQCRC2) and 6 low-molecular weight proteins (UQCRH/QCR6, UQCRB/QCR7, UQCRQ/QCR8, UQCR10/QCR9, UQCR11/QCR10 and a cleavage product of UQCRFS1). This cytochrome bc1 complex then forms a dimer.</text>
</comment>
<comment type="subcellular location">
    <subcellularLocation>
        <location evidence="2">Mitochondrion inner membrane</location>
        <topology evidence="2">Multi-pass membrane protein</topology>
    </subcellularLocation>
</comment>
<comment type="miscellaneous">
    <text evidence="1">Heme 1 (or BL or b562) is low-potential and absorbs at about 562 nm, and heme 2 (or BH or b566) is high-potential and absorbs at about 566 nm.</text>
</comment>
<comment type="similarity">
    <text evidence="3 4">Belongs to the cytochrome b family.</text>
</comment>
<comment type="caution">
    <text evidence="2">The full-length protein contains only eight transmembrane helices, not nine as predicted by bioinformatics tools.</text>
</comment>
<sequence length="379" mass="42710">MTNIRKTHPLMKIVNNAFIDLPAPSNISSWWNFGSLLGICLILQILTGLFLAMHYTADTATAFSSVTHICRDVNYGWIIRYMHANGASMFFICLFMHVGRGLYYGSYTFLETWNVGVILPFATMATAFMGYVLPWGQMSFWGATVITNLLSAIPYIGTDLVEWIWGGFSVDKATLTRFFAFHFILPFIIAALAMVHLLFLHETGSNNPTGTSSDMDKIPFHPYYTIKDILGVLLLILTLMLLVLFAPDLLGDPDNYTPANPLNTPPHIKPEWYFLFAYAILRSIPNKLGGVLALVLSILILVLMPLLHMSKQRSMMFRPISQCLFWILVADLLTLTWIGGQPVEHPYIIIGQLASIMYFTLILVLMPIASTIENNLLKW</sequence>
<proteinExistence type="inferred from homology"/>
<geneLocation type="mitochondrion"/>